<evidence type="ECO:0000255" key="1">
    <source>
        <dbReference type="HAMAP-Rule" id="MF_00021"/>
    </source>
</evidence>
<name>THII_STRS2</name>
<proteinExistence type="inferred from homology"/>
<comment type="function">
    <text evidence="1">Catalyzes the ATP-dependent transfer of a sulfur to tRNA to produce 4-thiouridine in position 8 of tRNAs, which functions as a near-UV photosensor. Also catalyzes the transfer of sulfur to the sulfur carrier protein ThiS, forming ThiS-thiocarboxylate. This is a step in the synthesis of thiazole, in the thiamine biosynthesis pathway. The sulfur is donated as persulfide by IscS.</text>
</comment>
<comment type="catalytic activity">
    <reaction evidence="1">
        <text>[ThiI sulfur-carrier protein]-S-sulfanyl-L-cysteine + a uridine in tRNA + 2 reduced [2Fe-2S]-[ferredoxin] + ATP + H(+) = [ThiI sulfur-carrier protein]-L-cysteine + a 4-thiouridine in tRNA + 2 oxidized [2Fe-2S]-[ferredoxin] + AMP + diphosphate</text>
        <dbReference type="Rhea" id="RHEA:24176"/>
        <dbReference type="Rhea" id="RHEA-COMP:10000"/>
        <dbReference type="Rhea" id="RHEA-COMP:10001"/>
        <dbReference type="Rhea" id="RHEA-COMP:13337"/>
        <dbReference type="Rhea" id="RHEA-COMP:13338"/>
        <dbReference type="Rhea" id="RHEA-COMP:13339"/>
        <dbReference type="Rhea" id="RHEA-COMP:13340"/>
        <dbReference type="ChEBI" id="CHEBI:15378"/>
        <dbReference type="ChEBI" id="CHEBI:29950"/>
        <dbReference type="ChEBI" id="CHEBI:30616"/>
        <dbReference type="ChEBI" id="CHEBI:33019"/>
        <dbReference type="ChEBI" id="CHEBI:33737"/>
        <dbReference type="ChEBI" id="CHEBI:33738"/>
        <dbReference type="ChEBI" id="CHEBI:61963"/>
        <dbReference type="ChEBI" id="CHEBI:65315"/>
        <dbReference type="ChEBI" id="CHEBI:136798"/>
        <dbReference type="ChEBI" id="CHEBI:456215"/>
        <dbReference type="EC" id="2.8.1.4"/>
    </reaction>
</comment>
<comment type="catalytic activity">
    <reaction evidence="1">
        <text>[ThiS sulfur-carrier protein]-C-terminal Gly-Gly-AMP + S-sulfanyl-L-cysteinyl-[cysteine desulfurase] + AH2 = [ThiS sulfur-carrier protein]-C-terminal-Gly-aminoethanethioate + L-cysteinyl-[cysteine desulfurase] + A + AMP + 2 H(+)</text>
        <dbReference type="Rhea" id="RHEA:43340"/>
        <dbReference type="Rhea" id="RHEA-COMP:12157"/>
        <dbReference type="Rhea" id="RHEA-COMP:12158"/>
        <dbReference type="Rhea" id="RHEA-COMP:12910"/>
        <dbReference type="Rhea" id="RHEA-COMP:19908"/>
        <dbReference type="ChEBI" id="CHEBI:13193"/>
        <dbReference type="ChEBI" id="CHEBI:15378"/>
        <dbReference type="ChEBI" id="CHEBI:17499"/>
        <dbReference type="ChEBI" id="CHEBI:29950"/>
        <dbReference type="ChEBI" id="CHEBI:61963"/>
        <dbReference type="ChEBI" id="CHEBI:90618"/>
        <dbReference type="ChEBI" id="CHEBI:232372"/>
        <dbReference type="ChEBI" id="CHEBI:456215"/>
    </reaction>
</comment>
<comment type="pathway">
    <text evidence="1">Cofactor biosynthesis; thiamine diphosphate biosynthesis.</text>
</comment>
<comment type="subcellular location">
    <subcellularLocation>
        <location evidence="1">Cytoplasm</location>
    </subcellularLocation>
</comment>
<comment type="similarity">
    <text evidence="1">Belongs to the ThiI family.</text>
</comment>
<organism>
    <name type="scientific">Streptococcus suis (strain 98HAH33)</name>
    <dbReference type="NCBI Taxonomy" id="391296"/>
    <lineage>
        <taxon>Bacteria</taxon>
        <taxon>Bacillati</taxon>
        <taxon>Bacillota</taxon>
        <taxon>Bacilli</taxon>
        <taxon>Lactobacillales</taxon>
        <taxon>Streptococcaceae</taxon>
        <taxon>Streptococcus</taxon>
    </lineage>
</organism>
<dbReference type="EC" id="2.8.1.4" evidence="1"/>
<dbReference type="EMBL" id="CP000408">
    <property type="protein sequence ID" value="ABP91934.1"/>
    <property type="molecule type" value="Genomic_DNA"/>
</dbReference>
<dbReference type="SMR" id="A4W0P5"/>
<dbReference type="KEGG" id="ssv:SSU98_0776"/>
<dbReference type="HOGENOM" id="CLU_037952_4_0_9"/>
<dbReference type="UniPathway" id="UPA00060"/>
<dbReference type="GO" id="GO:0005829">
    <property type="term" value="C:cytosol"/>
    <property type="evidence" value="ECO:0007669"/>
    <property type="project" value="TreeGrafter"/>
</dbReference>
<dbReference type="GO" id="GO:0005524">
    <property type="term" value="F:ATP binding"/>
    <property type="evidence" value="ECO:0007669"/>
    <property type="project" value="UniProtKB-UniRule"/>
</dbReference>
<dbReference type="GO" id="GO:0004810">
    <property type="term" value="F:CCA tRNA nucleotidyltransferase activity"/>
    <property type="evidence" value="ECO:0007669"/>
    <property type="project" value="InterPro"/>
</dbReference>
<dbReference type="GO" id="GO:0000049">
    <property type="term" value="F:tRNA binding"/>
    <property type="evidence" value="ECO:0007669"/>
    <property type="project" value="UniProtKB-UniRule"/>
</dbReference>
<dbReference type="GO" id="GO:0140741">
    <property type="term" value="F:tRNA-uracil-4 sulfurtransferase activity"/>
    <property type="evidence" value="ECO:0007669"/>
    <property type="project" value="UniProtKB-EC"/>
</dbReference>
<dbReference type="GO" id="GO:0009228">
    <property type="term" value="P:thiamine biosynthetic process"/>
    <property type="evidence" value="ECO:0007669"/>
    <property type="project" value="UniProtKB-KW"/>
</dbReference>
<dbReference type="GO" id="GO:0009229">
    <property type="term" value="P:thiamine diphosphate biosynthetic process"/>
    <property type="evidence" value="ECO:0007669"/>
    <property type="project" value="UniProtKB-UniRule"/>
</dbReference>
<dbReference type="GO" id="GO:0052837">
    <property type="term" value="P:thiazole biosynthetic process"/>
    <property type="evidence" value="ECO:0007669"/>
    <property type="project" value="TreeGrafter"/>
</dbReference>
<dbReference type="GO" id="GO:0002937">
    <property type="term" value="P:tRNA 4-thiouridine biosynthesis"/>
    <property type="evidence" value="ECO:0007669"/>
    <property type="project" value="TreeGrafter"/>
</dbReference>
<dbReference type="CDD" id="cd01712">
    <property type="entry name" value="PPase_ThiI"/>
    <property type="match status" value="1"/>
</dbReference>
<dbReference type="CDD" id="cd11716">
    <property type="entry name" value="THUMP_ThiI"/>
    <property type="match status" value="1"/>
</dbReference>
<dbReference type="FunFam" id="3.40.50.620:FF:000053">
    <property type="entry name" value="Probable tRNA sulfurtransferase"/>
    <property type="match status" value="1"/>
</dbReference>
<dbReference type="Gene3D" id="3.30.2130.30">
    <property type="match status" value="1"/>
</dbReference>
<dbReference type="Gene3D" id="3.40.50.620">
    <property type="entry name" value="HUPs"/>
    <property type="match status" value="1"/>
</dbReference>
<dbReference type="HAMAP" id="MF_00021">
    <property type="entry name" value="ThiI"/>
    <property type="match status" value="1"/>
</dbReference>
<dbReference type="InterPro" id="IPR014729">
    <property type="entry name" value="Rossmann-like_a/b/a_fold"/>
</dbReference>
<dbReference type="InterPro" id="IPR020536">
    <property type="entry name" value="ThiI_AANH"/>
</dbReference>
<dbReference type="InterPro" id="IPR054173">
    <property type="entry name" value="ThiI_fer"/>
</dbReference>
<dbReference type="InterPro" id="IPR049961">
    <property type="entry name" value="ThiI_N"/>
</dbReference>
<dbReference type="InterPro" id="IPR004114">
    <property type="entry name" value="THUMP_dom"/>
</dbReference>
<dbReference type="InterPro" id="IPR049962">
    <property type="entry name" value="THUMP_ThiI"/>
</dbReference>
<dbReference type="InterPro" id="IPR003720">
    <property type="entry name" value="tRNA_STrfase"/>
</dbReference>
<dbReference type="InterPro" id="IPR050102">
    <property type="entry name" value="tRNA_sulfurtransferase_ThiI"/>
</dbReference>
<dbReference type="NCBIfam" id="TIGR00342">
    <property type="entry name" value="tRNA uracil 4-sulfurtransferase ThiI"/>
    <property type="match status" value="1"/>
</dbReference>
<dbReference type="PANTHER" id="PTHR43209">
    <property type="entry name" value="TRNA SULFURTRANSFERASE"/>
    <property type="match status" value="1"/>
</dbReference>
<dbReference type="PANTHER" id="PTHR43209:SF1">
    <property type="entry name" value="TRNA SULFURTRANSFERASE"/>
    <property type="match status" value="1"/>
</dbReference>
<dbReference type="Pfam" id="PF02568">
    <property type="entry name" value="ThiI"/>
    <property type="match status" value="1"/>
</dbReference>
<dbReference type="Pfam" id="PF22025">
    <property type="entry name" value="ThiI_fer"/>
    <property type="match status" value="1"/>
</dbReference>
<dbReference type="Pfam" id="PF02926">
    <property type="entry name" value="THUMP"/>
    <property type="match status" value="1"/>
</dbReference>
<dbReference type="SMART" id="SM00981">
    <property type="entry name" value="THUMP"/>
    <property type="match status" value="1"/>
</dbReference>
<dbReference type="SUPFAM" id="SSF52402">
    <property type="entry name" value="Adenine nucleotide alpha hydrolases-like"/>
    <property type="match status" value="1"/>
</dbReference>
<dbReference type="SUPFAM" id="SSF143437">
    <property type="entry name" value="THUMP domain-like"/>
    <property type="match status" value="1"/>
</dbReference>
<dbReference type="PROSITE" id="PS51165">
    <property type="entry name" value="THUMP"/>
    <property type="match status" value="1"/>
</dbReference>
<gene>
    <name evidence="1" type="primary">thiI</name>
    <name type="ordered locus">SSU98_0776</name>
</gene>
<feature type="chain" id="PRO_1000074301" description="Probable tRNA sulfurtransferase">
    <location>
        <begin position="1"/>
        <end position="405"/>
    </location>
</feature>
<feature type="domain" description="THUMP" evidence="1">
    <location>
        <begin position="60"/>
        <end position="165"/>
    </location>
</feature>
<feature type="binding site" evidence="1">
    <location>
        <begin position="183"/>
        <end position="184"/>
    </location>
    <ligand>
        <name>ATP</name>
        <dbReference type="ChEBI" id="CHEBI:30616"/>
    </ligand>
</feature>
<feature type="binding site" evidence="1">
    <location>
        <begin position="208"/>
        <end position="209"/>
    </location>
    <ligand>
        <name>ATP</name>
        <dbReference type="ChEBI" id="CHEBI:30616"/>
    </ligand>
</feature>
<feature type="binding site" evidence="1">
    <location>
        <position position="265"/>
    </location>
    <ligand>
        <name>ATP</name>
        <dbReference type="ChEBI" id="CHEBI:30616"/>
    </ligand>
</feature>
<feature type="binding site" evidence="1">
    <location>
        <position position="287"/>
    </location>
    <ligand>
        <name>ATP</name>
        <dbReference type="ChEBI" id="CHEBI:30616"/>
    </ligand>
</feature>
<feature type="binding site" evidence="1">
    <location>
        <position position="296"/>
    </location>
    <ligand>
        <name>ATP</name>
        <dbReference type="ChEBI" id="CHEBI:30616"/>
    </ligand>
</feature>
<keyword id="KW-0067">ATP-binding</keyword>
<keyword id="KW-0963">Cytoplasm</keyword>
<keyword id="KW-0547">Nucleotide-binding</keyword>
<keyword id="KW-0694">RNA-binding</keyword>
<keyword id="KW-0784">Thiamine biosynthesis</keyword>
<keyword id="KW-0808">Transferase</keyword>
<keyword id="KW-0820">tRNA-binding</keyword>
<sequence>MNYSEIMIRYGELSTKGKNKMRFVNKLRNNIKHVLSVYPEVTVYFDRDRGHVYLNGADYQEVSASLKKIFGIQNFAPSYKIEKSVPALKEAVVEIMQTIYKEGMTFKIAARRSDHSFELDSRDLNQVLGDAVFTAIPNVQVQMKSPDITLRVEIRPDAAYISHEEIKGAGGLPVGTSGKGTLMLSGGIDSPVAGYLALKRGVEIEALHFASPPYTSPGALKKAHDLTRKLTAFGGNITFIEVPFTEIQEEIKEKAPEAYLMTLTRRFMMRITDRVREERGAMVIINGESLGQVASQTLESMQAINAVTNTPVIRPVVTMDKLEIIDIAQEIDTFDISIQPFEDCCTIFAPDRPKTNPKIKNVEQYEARMDVEGLVERAVAGIIVTEITPKEEVKDEVDSLIEDLL</sequence>
<reference key="1">
    <citation type="journal article" date="2007" name="PLoS ONE">
        <title>A glimpse of streptococcal toxic shock syndrome from comparative genomics of S. suis 2 Chinese isolates.</title>
        <authorList>
            <person name="Chen C."/>
            <person name="Tang J."/>
            <person name="Dong W."/>
            <person name="Wang C."/>
            <person name="Feng Y."/>
            <person name="Wang J."/>
            <person name="Zheng F."/>
            <person name="Pan X."/>
            <person name="Liu D."/>
            <person name="Li M."/>
            <person name="Song Y."/>
            <person name="Zhu X."/>
            <person name="Sun H."/>
            <person name="Feng T."/>
            <person name="Guo Z."/>
            <person name="Ju A."/>
            <person name="Ge J."/>
            <person name="Dong Y."/>
            <person name="Sun W."/>
            <person name="Jiang Y."/>
            <person name="Wang J."/>
            <person name="Yan J."/>
            <person name="Yang H."/>
            <person name="Wang X."/>
            <person name="Gao G.F."/>
            <person name="Yang R."/>
            <person name="Wang J."/>
            <person name="Yu J."/>
        </authorList>
    </citation>
    <scope>NUCLEOTIDE SEQUENCE [LARGE SCALE GENOMIC DNA]</scope>
    <source>
        <strain>98HAH33</strain>
    </source>
</reference>
<protein>
    <recommendedName>
        <fullName evidence="1">Probable tRNA sulfurtransferase</fullName>
        <ecNumber evidence="1">2.8.1.4</ecNumber>
    </recommendedName>
    <alternativeName>
        <fullName evidence="1">Sulfur carrier protein ThiS sulfurtransferase</fullName>
    </alternativeName>
    <alternativeName>
        <fullName evidence="1">Thiamine biosynthesis protein ThiI</fullName>
    </alternativeName>
    <alternativeName>
        <fullName evidence="1">tRNA 4-thiouridine synthase</fullName>
    </alternativeName>
</protein>
<accession>A4W0P5</accession>